<name>COX2_STRCA</name>
<gene>
    <name type="primary">MT-CO2</name>
    <name type="synonym">COII</name>
    <name type="synonym">COXII</name>
    <name type="synonym">MTCO2</name>
</gene>
<comment type="function">
    <text evidence="2">Component of the cytochrome c oxidase, the last enzyme in the mitochondrial electron transport chain which drives oxidative phosphorylation. The respiratory chain contains 3 multisubunit complexes succinate dehydrogenase (complex II, CII), ubiquinol-cytochrome c oxidoreductase (cytochrome b-c1 complex, complex III, CIII) and cytochrome c oxidase (complex IV, CIV), that cooperate to transfer electrons derived from NADH and succinate to molecular oxygen, creating an electrochemical gradient over the inner membrane that drives transmembrane transport and the ATP synthase. Cytochrome c oxidase is the component of the respiratory chain that catalyzes the reduction of oxygen to water. Electrons originating from reduced cytochrome c in the intermembrane space (IMS) are transferred via the dinuclear copper A center (CU(A)) of subunit 2 and heme A of subunit 1 to the active site in subunit 1, a binuclear center (BNC) formed by heme A3 and copper B (CU(B)). The BNC reduces molecular oxygen to 2 water molecules using 4 electrons from cytochrome c in the IMS and 4 protons from the mitochondrial matrix.</text>
</comment>
<comment type="catalytic activity">
    <reaction evidence="2">
        <text>4 Fe(II)-[cytochrome c] + O2 + 8 H(+)(in) = 4 Fe(III)-[cytochrome c] + 2 H2O + 4 H(+)(out)</text>
        <dbReference type="Rhea" id="RHEA:11436"/>
        <dbReference type="Rhea" id="RHEA-COMP:10350"/>
        <dbReference type="Rhea" id="RHEA-COMP:14399"/>
        <dbReference type="ChEBI" id="CHEBI:15377"/>
        <dbReference type="ChEBI" id="CHEBI:15378"/>
        <dbReference type="ChEBI" id="CHEBI:15379"/>
        <dbReference type="ChEBI" id="CHEBI:29033"/>
        <dbReference type="ChEBI" id="CHEBI:29034"/>
        <dbReference type="EC" id="7.1.1.9"/>
    </reaction>
    <physiologicalReaction direction="left-to-right" evidence="2">
        <dbReference type="Rhea" id="RHEA:11437"/>
    </physiologicalReaction>
</comment>
<comment type="cofactor">
    <cofactor evidence="3">
        <name>Cu cation</name>
        <dbReference type="ChEBI" id="CHEBI:23378"/>
    </cofactor>
    <text evidence="3">Binds a dinuclear copper A center per subunit.</text>
</comment>
<comment type="subunit">
    <text evidence="1 3">Component of the cytochrome c oxidase (complex IV, CIV), a multisubunit enzyme composed of 14 subunits. The complex is composed of a catalytic core of 3 subunits MT-CO1, MT-CO2 and MT-CO3, encoded in the mitochondrial DNA, and 11 supernumerary subunits COX4I, COX5A, COX5B, COX6A, COX6B, COX6C, COX7A, COX7B, COX7C, COX8 and NDUFA4, which are encoded in the nuclear genome. The complex exists as a monomer or a dimer and forms supercomplexes (SCs) in the inner mitochondrial membrane with NADH-ubiquinone oxidoreductase (complex I, CI) and ubiquinol-cytochrome c oxidoreductase (cytochrome b-c1 complex, complex III, CIII), resulting in different assemblies (supercomplex SCI(1)III(2)IV(1) and megacomplex MCI(2)III(2)IV(2)) (By similarity). Found in a complex with TMEM177, COA6, COX18, COX20, SCO1 and SCO2. Interacts with TMEM177 in a COX20-dependent manner. Interacts with COX20. Interacts with COX16 (By similarity).</text>
</comment>
<comment type="subcellular location">
    <subcellularLocation>
        <location evidence="3">Mitochondrion inner membrane</location>
        <topology evidence="3">Multi-pass membrane protein</topology>
    </subcellularLocation>
</comment>
<comment type="similarity">
    <text evidence="4">Belongs to the cytochrome c oxidase subunit 2 family.</text>
</comment>
<proteinExistence type="inferred from homology"/>
<geneLocation type="mitochondrion"/>
<sequence>MANPSQFGFQDASSPIMEELVEFHDHALMVALAICSLVLYLLALMLVEKLSSNTVDAQEVELIWTILPAIVLILLALPSLQILYMMDEIDEPDLTLKAIGHQWYWSYEYTDFKDLTFDSYMIPTSELPPGHFRLLEVDHRVVVPMESPIRVIITAGDVLHSWAVPTLGVKTDAIPGRLNQTSFITTRPGIFYGQCSEICGANHSYMPIVVESTPLTYFESWSSLLSTDS</sequence>
<keyword id="KW-0186">Copper</keyword>
<keyword id="KW-0249">Electron transport</keyword>
<keyword id="KW-0460">Magnesium</keyword>
<keyword id="KW-0472">Membrane</keyword>
<keyword id="KW-0479">Metal-binding</keyword>
<keyword id="KW-0496">Mitochondrion</keyword>
<keyword id="KW-0999">Mitochondrion inner membrane</keyword>
<keyword id="KW-0679">Respiratory chain</keyword>
<keyword id="KW-1278">Translocase</keyword>
<keyword id="KW-0812">Transmembrane</keyword>
<keyword id="KW-1133">Transmembrane helix</keyword>
<keyword id="KW-0813">Transport</keyword>
<dbReference type="EC" id="7.1.1.9"/>
<dbReference type="EMBL" id="Y12025">
    <property type="protein sequence ID" value="CAA72747.1"/>
    <property type="molecule type" value="Genomic_DNA"/>
</dbReference>
<dbReference type="EMBL" id="AF069429">
    <property type="protein sequence ID" value="AAD09386.1"/>
    <property type="molecule type" value="Genomic_DNA"/>
</dbReference>
<dbReference type="EMBL" id="AF338715">
    <property type="protein sequence ID" value="AAK53348.1"/>
    <property type="molecule type" value="Genomic_DNA"/>
</dbReference>
<dbReference type="EMBL" id="U76069">
    <property type="protein sequence ID" value="AAB61329.1"/>
    <property type="status" value="ALT_TERM"/>
    <property type="molecule type" value="Genomic_DNA"/>
</dbReference>
<dbReference type="PIR" id="D90612">
    <property type="entry name" value="D90612"/>
</dbReference>
<dbReference type="PIR" id="T12412">
    <property type="entry name" value="T12412"/>
</dbReference>
<dbReference type="SMR" id="O21400"/>
<dbReference type="CTD" id="4513"/>
<dbReference type="GO" id="GO:0005743">
    <property type="term" value="C:mitochondrial inner membrane"/>
    <property type="evidence" value="ECO:0007669"/>
    <property type="project" value="UniProtKB-SubCell"/>
</dbReference>
<dbReference type="GO" id="GO:0045277">
    <property type="term" value="C:respiratory chain complex IV"/>
    <property type="evidence" value="ECO:0000250"/>
    <property type="project" value="UniProtKB"/>
</dbReference>
<dbReference type="GO" id="GO:0005507">
    <property type="term" value="F:copper ion binding"/>
    <property type="evidence" value="ECO:0007669"/>
    <property type="project" value="InterPro"/>
</dbReference>
<dbReference type="GO" id="GO:0004129">
    <property type="term" value="F:cytochrome-c oxidase activity"/>
    <property type="evidence" value="ECO:0007669"/>
    <property type="project" value="UniProtKB-EC"/>
</dbReference>
<dbReference type="GO" id="GO:0042773">
    <property type="term" value="P:ATP synthesis coupled electron transport"/>
    <property type="evidence" value="ECO:0007669"/>
    <property type="project" value="TreeGrafter"/>
</dbReference>
<dbReference type="CDD" id="cd13912">
    <property type="entry name" value="CcO_II_C"/>
    <property type="match status" value="1"/>
</dbReference>
<dbReference type="FunFam" id="1.10.287.90:FF:000001">
    <property type="entry name" value="Cytochrome c oxidase subunit 2"/>
    <property type="match status" value="1"/>
</dbReference>
<dbReference type="FunFam" id="2.60.40.420:FF:000001">
    <property type="entry name" value="Cytochrome c oxidase subunit 2"/>
    <property type="match status" value="1"/>
</dbReference>
<dbReference type="Gene3D" id="1.10.287.90">
    <property type="match status" value="1"/>
</dbReference>
<dbReference type="Gene3D" id="2.60.40.420">
    <property type="entry name" value="Cupredoxins - blue copper proteins"/>
    <property type="match status" value="1"/>
</dbReference>
<dbReference type="InterPro" id="IPR045187">
    <property type="entry name" value="CcO_II"/>
</dbReference>
<dbReference type="InterPro" id="IPR002429">
    <property type="entry name" value="CcO_II-like_C"/>
</dbReference>
<dbReference type="InterPro" id="IPR034210">
    <property type="entry name" value="CcO_II_C"/>
</dbReference>
<dbReference type="InterPro" id="IPR001505">
    <property type="entry name" value="Copper_CuA"/>
</dbReference>
<dbReference type="InterPro" id="IPR008972">
    <property type="entry name" value="Cupredoxin"/>
</dbReference>
<dbReference type="InterPro" id="IPR014222">
    <property type="entry name" value="Cyt_c_oxidase_su2"/>
</dbReference>
<dbReference type="InterPro" id="IPR011759">
    <property type="entry name" value="Cyt_c_oxidase_su2_TM_dom"/>
</dbReference>
<dbReference type="InterPro" id="IPR036257">
    <property type="entry name" value="Cyt_c_oxidase_su2_TM_sf"/>
</dbReference>
<dbReference type="NCBIfam" id="TIGR02866">
    <property type="entry name" value="CoxB"/>
    <property type="match status" value="1"/>
</dbReference>
<dbReference type="PANTHER" id="PTHR22888:SF9">
    <property type="entry name" value="CYTOCHROME C OXIDASE SUBUNIT 2"/>
    <property type="match status" value="1"/>
</dbReference>
<dbReference type="PANTHER" id="PTHR22888">
    <property type="entry name" value="CYTOCHROME C OXIDASE, SUBUNIT II"/>
    <property type="match status" value="1"/>
</dbReference>
<dbReference type="Pfam" id="PF00116">
    <property type="entry name" value="COX2"/>
    <property type="match status" value="1"/>
</dbReference>
<dbReference type="Pfam" id="PF02790">
    <property type="entry name" value="COX2_TM"/>
    <property type="match status" value="1"/>
</dbReference>
<dbReference type="PRINTS" id="PR01166">
    <property type="entry name" value="CYCOXIDASEII"/>
</dbReference>
<dbReference type="SUPFAM" id="SSF49503">
    <property type="entry name" value="Cupredoxins"/>
    <property type="match status" value="1"/>
</dbReference>
<dbReference type="SUPFAM" id="SSF81464">
    <property type="entry name" value="Cytochrome c oxidase subunit II-like, transmembrane region"/>
    <property type="match status" value="1"/>
</dbReference>
<dbReference type="PROSITE" id="PS00078">
    <property type="entry name" value="COX2"/>
    <property type="match status" value="1"/>
</dbReference>
<dbReference type="PROSITE" id="PS50857">
    <property type="entry name" value="COX2_CUA"/>
    <property type="match status" value="1"/>
</dbReference>
<dbReference type="PROSITE" id="PS50999">
    <property type="entry name" value="COX2_TM"/>
    <property type="match status" value="1"/>
</dbReference>
<accession>O21400</accession>
<accession>O03894</accession>
<reference key="1">
    <citation type="journal article" date="1997" name="Mol. Biol. Evol.">
        <title>The mtDNA sequence of the ostrich and the divergence between paleognathous and neognathous birds.</title>
        <authorList>
            <person name="Harlid A."/>
            <person name="Janke A."/>
            <person name="Arnason U."/>
        </authorList>
    </citation>
    <scope>NUCLEOTIDE SEQUENCE [GENOMIC DNA]</scope>
</reference>
<reference key="2">
    <citation type="submission" date="1998-06" db="EMBL/GenBank/DDBJ databases">
        <title>Primers for a PCR-based approach to complete mitochondrial genome sequencing.</title>
        <authorList>
            <person name="Sorenson M.D."/>
            <person name="Dimcheff D.E."/>
            <person name="Ast J.C."/>
            <person name="Yuri T."/>
            <person name="Mindell D.P."/>
        </authorList>
    </citation>
    <scope>NUCLEOTIDE SEQUENCE [GENOMIC DNA]</scope>
</reference>
<reference key="3">
    <citation type="journal article" date="2001" name="Proc. R. Soc. B">
        <title>Complete mitochondrial DNA genome sequences of extinct birds: ratite phylogenetics and the vicariance biogeography hypothesis.</title>
        <authorList>
            <person name="Haddrath O."/>
            <person name="Baker A.J."/>
        </authorList>
    </citation>
    <scope>NUCLEOTIDE SEQUENCE [GENOMIC DNA]</scope>
</reference>
<reference key="4">
    <citation type="book" date="1997" name="Avian molecular evolution and systematics">
        <title>Phylogenetic relationships of the ratite birds: resolving conflicts between molecular and morphological data sets.</title>
        <editorList>
            <person name="Mindell D.P."/>
        </editorList>
        <authorList>
            <person name="Lee K."/>
            <person name="Feinstein J."/>
            <person name="Cracraft J."/>
        </authorList>
    </citation>
    <scope>NUCLEOTIDE SEQUENCE [GENOMIC DNA] OF 33-229</scope>
</reference>
<protein>
    <recommendedName>
        <fullName>Cytochrome c oxidase subunit 2</fullName>
        <ecNumber>7.1.1.9</ecNumber>
    </recommendedName>
    <alternativeName>
        <fullName>Cytochrome c oxidase polypeptide II</fullName>
    </alternativeName>
</protein>
<organism>
    <name type="scientific">Struthio camelus</name>
    <name type="common">Common ostrich</name>
    <dbReference type="NCBI Taxonomy" id="8801"/>
    <lineage>
        <taxon>Eukaryota</taxon>
        <taxon>Metazoa</taxon>
        <taxon>Chordata</taxon>
        <taxon>Craniata</taxon>
        <taxon>Vertebrata</taxon>
        <taxon>Euteleostomi</taxon>
        <taxon>Archelosauria</taxon>
        <taxon>Archosauria</taxon>
        <taxon>Dinosauria</taxon>
        <taxon>Saurischia</taxon>
        <taxon>Theropoda</taxon>
        <taxon>Coelurosauria</taxon>
        <taxon>Aves</taxon>
        <taxon>Palaeognathae</taxon>
        <taxon>Struthioniformes</taxon>
        <taxon>Struthionidae</taxon>
        <taxon>Struthio</taxon>
    </lineage>
</organism>
<evidence type="ECO:0000250" key="1">
    <source>
        <dbReference type="UniProtKB" id="P00403"/>
    </source>
</evidence>
<evidence type="ECO:0000250" key="2">
    <source>
        <dbReference type="UniProtKB" id="P00410"/>
    </source>
</evidence>
<evidence type="ECO:0000250" key="3">
    <source>
        <dbReference type="UniProtKB" id="P68530"/>
    </source>
</evidence>
<evidence type="ECO:0000305" key="4"/>
<feature type="chain" id="PRO_0000183696" description="Cytochrome c oxidase subunit 2">
    <location>
        <begin position="1"/>
        <end position="229"/>
    </location>
</feature>
<feature type="topological domain" description="Mitochondrial intermembrane" evidence="3">
    <location>
        <begin position="1"/>
        <end position="14"/>
    </location>
</feature>
<feature type="transmembrane region" description="Helical; Name=I" evidence="3">
    <location>
        <begin position="15"/>
        <end position="45"/>
    </location>
</feature>
<feature type="topological domain" description="Mitochondrial matrix" evidence="3">
    <location>
        <begin position="46"/>
        <end position="58"/>
    </location>
</feature>
<feature type="transmembrane region" description="Helical; Name=II" evidence="3">
    <location>
        <begin position="59"/>
        <end position="86"/>
    </location>
</feature>
<feature type="topological domain" description="Mitochondrial intermembrane" evidence="3">
    <location>
        <begin position="87"/>
        <end position="229"/>
    </location>
</feature>
<feature type="binding site" evidence="3">
    <location>
        <position position="160"/>
    </location>
    <ligand>
        <name>Cu cation</name>
        <dbReference type="ChEBI" id="CHEBI:23378"/>
        <label>A1</label>
    </ligand>
</feature>
<feature type="binding site" evidence="3">
    <location>
        <position position="195"/>
    </location>
    <ligand>
        <name>Cu cation</name>
        <dbReference type="ChEBI" id="CHEBI:23378"/>
        <label>A1</label>
    </ligand>
</feature>
<feature type="binding site" evidence="3">
    <location>
        <position position="195"/>
    </location>
    <ligand>
        <name>Cu cation</name>
        <dbReference type="ChEBI" id="CHEBI:23378"/>
        <label>A2</label>
    </ligand>
</feature>
<feature type="binding site" evidence="3">
    <location>
        <position position="197"/>
    </location>
    <ligand>
        <name>Cu cation</name>
        <dbReference type="ChEBI" id="CHEBI:23378"/>
        <label>A2</label>
    </ligand>
</feature>
<feature type="binding site" evidence="3">
    <location>
        <position position="197"/>
    </location>
    <ligand>
        <name>Mg(2+)</name>
        <dbReference type="ChEBI" id="CHEBI:18420"/>
        <note>ligand shared with MT-CO1</note>
    </ligand>
</feature>
<feature type="binding site" evidence="3">
    <location>
        <position position="199"/>
    </location>
    <ligand>
        <name>Cu cation</name>
        <dbReference type="ChEBI" id="CHEBI:23378"/>
        <label>A1</label>
    </ligand>
</feature>
<feature type="binding site" evidence="3">
    <location>
        <position position="199"/>
    </location>
    <ligand>
        <name>Cu cation</name>
        <dbReference type="ChEBI" id="CHEBI:23378"/>
        <label>A2</label>
    </ligand>
</feature>
<feature type="binding site" evidence="3">
    <location>
        <position position="203"/>
    </location>
    <ligand>
        <name>Cu cation</name>
        <dbReference type="ChEBI" id="CHEBI:23378"/>
        <label>A2</label>
    </ligand>
</feature>
<feature type="binding site" evidence="3">
    <location>
        <position position="206"/>
    </location>
    <ligand>
        <name>Cu cation</name>
        <dbReference type="ChEBI" id="CHEBI:23378"/>
        <label>A1</label>
    </ligand>
</feature>